<gene>
    <name type="ordered locus">At5g28160</name>
    <name type="ORF">T24G3.90</name>
</gene>
<reference key="1">
    <citation type="journal article" date="2000" name="Nature">
        <title>Sequence and analysis of chromosome 5 of the plant Arabidopsis thaliana.</title>
        <authorList>
            <person name="Tabata S."/>
            <person name="Kaneko T."/>
            <person name="Nakamura Y."/>
            <person name="Kotani H."/>
            <person name="Kato T."/>
            <person name="Asamizu E."/>
            <person name="Miyajima N."/>
            <person name="Sasamoto S."/>
            <person name="Kimura T."/>
            <person name="Hosouchi T."/>
            <person name="Kawashima K."/>
            <person name="Kohara M."/>
            <person name="Matsumoto M."/>
            <person name="Matsuno A."/>
            <person name="Muraki A."/>
            <person name="Nakayama S."/>
            <person name="Nakazaki N."/>
            <person name="Naruo K."/>
            <person name="Okumura S."/>
            <person name="Shinpo S."/>
            <person name="Takeuchi C."/>
            <person name="Wada T."/>
            <person name="Watanabe A."/>
            <person name="Yamada M."/>
            <person name="Yasuda M."/>
            <person name="Sato S."/>
            <person name="de la Bastide M."/>
            <person name="Huang E."/>
            <person name="Spiegel L."/>
            <person name="Gnoj L."/>
            <person name="O'Shaughnessy A."/>
            <person name="Preston R."/>
            <person name="Habermann K."/>
            <person name="Murray J."/>
            <person name="Johnson D."/>
            <person name="Rohlfing T."/>
            <person name="Nelson J."/>
            <person name="Stoneking T."/>
            <person name="Pepin K."/>
            <person name="Spieth J."/>
            <person name="Sekhon M."/>
            <person name="Armstrong J."/>
            <person name="Becker M."/>
            <person name="Belter E."/>
            <person name="Cordum H."/>
            <person name="Cordes M."/>
            <person name="Courtney L."/>
            <person name="Courtney W."/>
            <person name="Dante M."/>
            <person name="Du H."/>
            <person name="Edwards J."/>
            <person name="Fryman J."/>
            <person name="Haakensen B."/>
            <person name="Lamar E."/>
            <person name="Latreille P."/>
            <person name="Leonard S."/>
            <person name="Meyer R."/>
            <person name="Mulvaney E."/>
            <person name="Ozersky P."/>
            <person name="Riley A."/>
            <person name="Strowmatt C."/>
            <person name="Wagner-McPherson C."/>
            <person name="Wollam A."/>
            <person name="Yoakum M."/>
            <person name="Bell M."/>
            <person name="Dedhia N."/>
            <person name="Parnell L."/>
            <person name="Shah R."/>
            <person name="Rodriguez M."/>
            <person name="Hoon See L."/>
            <person name="Vil D."/>
            <person name="Baker J."/>
            <person name="Kirchoff K."/>
            <person name="Toth K."/>
            <person name="King L."/>
            <person name="Bahret A."/>
            <person name="Miller B."/>
            <person name="Marra M.A."/>
            <person name="Martienssen R."/>
            <person name="McCombie W.R."/>
            <person name="Wilson R.K."/>
            <person name="Murphy G."/>
            <person name="Bancroft I."/>
            <person name="Volckaert G."/>
            <person name="Wambutt R."/>
            <person name="Duesterhoeft A."/>
            <person name="Stiekema W."/>
            <person name="Pohl T."/>
            <person name="Entian K.-D."/>
            <person name="Terryn N."/>
            <person name="Hartley N."/>
            <person name="Bent E."/>
            <person name="Johnson S."/>
            <person name="Langham S.-A."/>
            <person name="McCullagh B."/>
            <person name="Robben J."/>
            <person name="Grymonprez B."/>
            <person name="Zimmermann W."/>
            <person name="Ramsperger U."/>
            <person name="Wedler H."/>
            <person name="Balke K."/>
            <person name="Wedler E."/>
            <person name="Peters S."/>
            <person name="van Staveren M."/>
            <person name="Dirkse W."/>
            <person name="Mooijman P."/>
            <person name="Klein Lankhorst R."/>
            <person name="Weitzenegger T."/>
            <person name="Bothe G."/>
            <person name="Rose M."/>
            <person name="Hauf J."/>
            <person name="Berneiser S."/>
            <person name="Hempel S."/>
            <person name="Feldpausch M."/>
            <person name="Lamberth S."/>
            <person name="Villarroel R."/>
            <person name="Gielen J."/>
            <person name="Ardiles W."/>
            <person name="Bents O."/>
            <person name="Lemcke K."/>
            <person name="Kolesov G."/>
            <person name="Mayer K.F.X."/>
            <person name="Rudd S."/>
            <person name="Schoof H."/>
            <person name="Schueller C."/>
            <person name="Zaccaria P."/>
            <person name="Mewes H.-W."/>
            <person name="Bevan M."/>
            <person name="Fransz P.F."/>
        </authorList>
    </citation>
    <scope>NUCLEOTIDE SEQUENCE [LARGE SCALE GENOMIC DNA]</scope>
    <source>
        <strain>cv. Columbia</strain>
    </source>
</reference>
<reference key="2">
    <citation type="journal article" date="2017" name="Plant J.">
        <title>Araport11: a complete reannotation of the Arabidopsis thaliana reference genome.</title>
        <authorList>
            <person name="Cheng C.Y."/>
            <person name="Krishnakumar V."/>
            <person name="Chan A.P."/>
            <person name="Thibaud-Nissen F."/>
            <person name="Schobel S."/>
            <person name="Town C.D."/>
        </authorList>
    </citation>
    <scope>GENOME REANNOTATION</scope>
    <source>
        <strain>cv. Columbia</strain>
    </source>
</reference>
<accession>Q3E8Y7</accession>
<feature type="chain" id="PRO_0000283269" description="Putative F-box/kelch-repeat protein At5g28160">
    <location>
        <begin position="1"/>
        <end position="324"/>
    </location>
</feature>
<feature type="domain" description="F-box" evidence="1">
    <location>
        <begin position="7"/>
        <end position="54"/>
    </location>
</feature>
<feature type="repeat" description="Kelch">
    <location>
        <begin position="170"/>
        <end position="216"/>
    </location>
</feature>
<protein>
    <recommendedName>
        <fullName>Putative F-box/kelch-repeat protein At5g28160</fullName>
    </recommendedName>
</protein>
<sequence length="324" mass="37099">MNSEVERPSFLSLPDEIILSCLARISRSYYPKLSLVCKTFRTLLISNELIVARLHLKTHETFCHVCLKFPDKPNPSMFTLWIKPGTILTNQLEKNKRSTRDTRLVQIPSSYYYNVPFYLVMVGSEVYGLSQRNDPSSNMFVRNKGDIFLCKAPNMTVARAKASAVVFNGKIYVMGGCMADESVNWGEVFDIKTQTWEALPDPGPEFRFSSIRKIDVFQEKLYVRSNEKKDSVYDPKEEWRVVKGLDMLNRNLGCGTIEIVHYGGKLLILWDKVDLSHDKDIWCAVIALEKRHGSDEVWGNIEWADIVLTVPSSYVFVNSLETGF</sequence>
<organism>
    <name type="scientific">Arabidopsis thaliana</name>
    <name type="common">Mouse-ear cress</name>
    <dbReference type="NCBI Taxonomy" id="3702"/>
    <lineage>
        <taxon>Eukaryota</taxon>
        <taxon>Viridiplantae</taxon>
        <taxon>Streptophyta</taxon>
        <taxon>Embryophyta</taxon>
        <taxon>Tracheophyta</taxon>
        <taxon>Spermatophyta</taxon>
        <taxon>Magnoliopsida</taxon>
        <taxon>eudicotyledons</taxon>
        <taxon>Gunneridae</taxon>
        <taxon>Pentapetalae</taxon>
        <taxon>rosids</taxon>
        <taxon>malvids</taxon>
        <taxon>Brassicales</taxon>
        <taxon>Brassicaceae</taxon>
        <taxon>Camelineae</taxon>
        <taxon>Arabidopsis</taxon>
    </lineage>
</organism>
<keyword id="KW-0880">Kelch repeat</keyword>
<keyword id="KW-1185">Reference proteome</keyword>
<name>FK114_ARATH</name>
<evidence type="ECO:0000255" key="1">
    <source>
        <dbReference type="PROSITE-ProRule" id="PRU00080"/>
    </source>
</evidence>
<dbReference type="EMBL" id="AC006192">
    <property type="status" value="NOT_ANNOTATED_CDS"/>
    <property type="molecule type" value="Genomic_DNA"/>
</dbReference>
<dbReference type="EMBL" id="CP002688">
    <property type="protein sequence ID" value="AED93777.1"/>
    <property type="molecule type" value="Genomic_DNA"/>
</dbReference>
<dbReference type="RefSeq" id="NP_198168.1">
    <property type="nucleotide sequence ID" value="NM_122699.1"/>
</dbReference>
<dbReference type="SMR" id="Q3E8Y7"/>
<dbReference type="FunCoup" id="Q3E8Y7">
    <property type="interactions" value="3"/>
</dbReference>
<dbReference type="PaxDb" id="3702-AT5G28160.1"/>
<dbReference type="EnsemblPlants" id="AT5G28160.1">
    <property type="protein sequence ID" value="AT5G28160.1"/>
    <property type="gene ID" value="AT5G28160"/>
</dbReference>
<dbReference type="GeneID" id="832891"/>
<dbReference type="Gramene" id="AT5G28160.1">
    <property type="protein sequence ID" value="AT5G28160.1"/>
    <property type="gene ID" value="AT5G28160"/>
</dbReference>
<dbReference type="KEGG" id="ath:AT5G28160"/>
<dbReference type="Araport" id="AT5G28160"/>
<dbReference type="TAIR" id="AT5G28160"/>
<dbReference type="eggNOG" id="KOG1072">
    <property type="taxonomic scope" value="Eukaryota"/>
</dbReference>
<dbReference type="HOGENOM" id="CLU_032521_2_0_1"/>
<dbReference type="InParanoid" id="Q3E8Y7"/>
<dbReference type="OMA" id="WDKFARR"/>
<dbReference type="PhylomeDB" id="Q3E8Y7"/>
<dbReference type="PRO" id="PR:Q3E8Y7"/>
<dbReference type="Proteomes" id="UP000006548">
    <property type="component" value="Chromosome 5"/>
</dbReference>
<dbReference type="GO" id="GO:0005829">
    <property type="term" value="C:cytosol"/>
    <property type="evidence" value="ECO:0007005"/>
    <property type="project" value="TAIR"/>
</dbReference>
<dbReference type="CDD" id="cd22152">
    <property type="entry name" value="F-box_AtAFR-like"/>
    <property type="match status" value="1"/>
</dbReference>
<dbReference type="Gene3D" id="2.120.10.80">
    <property type="entry name" value="Kelch-type beta propeller"/>
    <property type="match status" value="1"/>
</dbReference>
<dbReference type="InterPro" id="IPR036047">
    <property type="entry name" value="F-box-like_dom_sf"/>
</dbReference>
<dbReference type="InterPro" id="IPR050354">
    <property type="entry name" value="F-box/kelch-repeat_ARATH"/>
</dbReference>
<dbReference type="InterPro" id="IPR001810">
    <property type="entry name" value="F-box_dom"/>
</dbReference>
<dbReference type="InterPro" id="IPR015915">
    <property type="entry name" value="Kelch-typ_b-propeller"/>
</dbReference>
<dbReference type="PANTHER" id="PTHR24414:SF157">
    <property type="entry name" value="F-BOX DOMAIN-CONTAINING PROTEIN"/>
    <property type="match status" value="1"/>
</dbReference>
<dbReference type="PANTHER" id="PTHR24414">
    <property type="entry name" value="F-BOX/KELCH-REPEAT PROTEIN SKIP4"/>
    <property type="match status" value="1"/>
</dbReference>
<dbReference type="Pfam" id="PF00646">
    <property type="entry name" value="F-box"/>
    <property type="match status" value="1"/>
</dbReference>
<dbReference type="Pfam" id="PF25210">
    <property type="entry name" value="Kelch_FKB95"/>
    <property type="match status" value="1"/>
</dbReference>
<dbReference type="SMART" id="SM00256">
    <property type="entry name" value="FBOX"/>
    <property type="match status" value="1"/>
</dbReference>
<dbReference type="SUPFAM" id="SSF81383">
    <property type="entry name" value="F-box domain"/>
    <property type="match status" value="1"/>
</dbReference>
<dbReference type="SUPFAM" id="SSF117281">
    <property type="entry name" value="Kelch motif"/>
    <property type="match status" value="1"/>
</dbReference>
<dbReference type="PROSITE" id="PS50181">
    <property type="entry name" value="FBOX"/>
    <property type="match status" value="1"/>
</dbReference>
<proteinExistence type="predicted"/>